<accession>Q13TV1</accession>
<dbReference type="EC" id="7.6.2.10" evidence="1"/>
<dbReference type="EMBL" id="CP000270">
    <property type="protein sequence ID" value="ABE32488.1"/>
    <property type="molecule type" value="Genomic_DNA"/>
</dbReference>
<dbReference type="RefSeq" id="WP_011489955.1">
    <property type="nucleotide sequence ID" value="NC_007951.1"/>
</dbReference>
<dbReference type="SMR" id="Q13TV1"/>
<dbReference type="STRING" id="266265.Bxe_A0445"/>
<dbReference type="KEGG" id="bxb:DR64_2616"/>
<dbReference type="KEGG" id="bxe:Bxe_A0445"/>
<dbReference type="PATRIC" id="fig|266265.5.peg.4173"/>
<dbReference type="eggNOG" id="COG3842">
    <property type="taxonomic scope" value="Bacteria"/>
</dbReference>
<dbReference type="OrthoDB" id="5298774at2"/>
<dbReference type="Proteomes" id="UP000001817">
    <property type="component" value="Chromosome 1"/>
</dbReference>
<dbReference type="GO" id="GO:0055052">
    <property type="term" value="C:ATP-binding cassette (ABC) transporter complex, substrate-binding subunit-containing"/>
    <property type="evidence" value="ECO:0007669"/>
    <property type="project" value="TreeGrafter"/>
</dbReference>
<dbReference type="GO" id="GO:0015430">
    <property type="term" value="F:ABC-type glycerol-3-phosphate transporter activity"/>
    <property type="evidence" value="ECO:0007669"/>
    <property type="project" value="UniProtKB-EC"/>
</dbReference>
<dbReference type="GO" id="GO:0005524">
    <property type="term" value="F:ATP binding"/>
    <property type="evidence" value="ECO:0007669"/>
    <property type="project" value="UniProtKB-KW"/>
</dbReference>
<dbReference type="GO" id="GO:0016887">
    <property type="term" value="F:ATP hydrolysis activity"/>
    <property type="evidence" value="ECO:0007669"/>
    <property type="project" value="InterPro"/>
</dbReference>
<dbReference type="GO" id="GO:0008643">
    <property type="term" value="P:carbohydrate transport"/>
    <property type="evidence" value="ECO:0007669"/>
    <property type="project" value="InterPro"/>
</dbReference>
<dbReference type="GO" id="GO:0001407">
    <property type="term" value="P:glycerophosphodiester transmembrane transport"/>
    <property type="evidence" value="ECO:0007669"/>
    <property type="project" value="TreeGrafter"/>
</dbReference>
<dbReference type="CDD" id="cd03301">
    <property type="entry name" value="ABC_MalK_N"/>
    <property type="match status" value="1"/>
</dbReference>
<dbReference type="FunFam" id="3.40.50.300:FF:000042">
    <property type="entry name" value="Maltose/maltodextrin ABC transporter, ATP-binding protein"/>
    <property type="match status" value="1"/>
</dbReference>
<dbReference type="Gene3D" id="2.40.50.100">
    <property type="match status" value="1"/>
</dbReference>
<dbReference type="Gene3D" id="2.40.50.140">
    <property type="entry name" value="Nucleic acid-binding proteins"/>
    <property type="match status" value="1"/>
</dbReference>
<dbReference type="Gene3D" id="3.40.50.300">
    <property type="entry name" value="P-loop containing nucleotide triphosphate hydrolases"/>
    <property type="match status" value="1"/>
</dbReference>
<dbReference type="InterPro" id="IPR003593">
    <property type="entry name" value="AAA+_ATPase"/>
</dbReference>
<dbReference type="InterPro" id="IPR003439">
    <property type="entry name" value="ABC_transporter-like_ATP-bd"/>
</dbReference>
<dbReference type="InterPro" id="IPR017871">
    <property type="entry name" value="ABC_transporter-like_CS"/>
</dbReference>
<dbReference type="InterPro" id="IPR015855">
    <property type="entry name" value="ABC_transpr_MalK-like"/>
</dbReference>
<dbReference type="InterPro" id="IPR047641">
    <property type="entry name" value="ABC_transpr_MalK/UgpC-like"/>
</dbReference>
<dbReference type="InterPro" id="IPR008995">
    <property type="entry name" value="Mo/tungstate-bd_C_term_dom"/>
</dbReference>
<dbReference type="InterPro" id="IPR012340">
    <property type="entry name" value="NA-bd_OB-fold"/>
</dbReference>
<dbReference type="InterPro" id="IPR040582">
    <property type="entry name" value="OB_MalK-like"/>
</dbReference>
<dbReference type="InterPro" id="IPR027417">
    <property type="entry name" value="P-loop_NTPase"/>
</dbReference>
<dbReference type="NCBIfam" id="NF008653">
    <property type="entry name" value="PRK11650.1"/>
    <property type="match status" value="1"/>
</dbReference>
<dbReference type="PANTHER" id="PTHR43875">
    <property type="entry name" value="MALTODEXTRIN IMPORT ATP-BINDING PROTEIN MSMX"/>
    <property type="match status" value="1"/>
</dbReference>
<dbReference type="PANTHER" id="PTHR43875:SF12">
    <property type="entry name" value="SN-GLYCEROL-3-PHOSPHATE IMPORT ATP-BINDING PROTEIN UGPC"/>
    <property type="match status" value="1"/>
</dbReference>
<dbReference type="Pfam" id="PF00005">
    <property type="entry name" value="ABC_tran"/>
    <property type="match status" value="1"/>
</dbReference>
<dbReference type="Pfam" id="PF17912">
    <property type="entry name" value="OB_MalK"/>
    <property type="match status" value="1"/>
</dbReference>
<dbReference type="SMART" id="SM00382">
    <property type="entry name" value="AAA"/>
    <property type="match status" value="1"/>
</dbReference>
<dbReference type="SUPFAM" id="SSF50331">
    <property type="entry name" value="MOP-like"/>
    <property type="match status" value="1"/>
</dbReference>
<dbReference type="SUPFAM" id="SSF52540">
    <property type="entry name" value="P-loop containing nucleoside triphosphate hydrolases"/>
    <property type="match status" value="1"/>
</dbReference>
<dbReference type="PROSITE" id="PS00211">
    <property type="entry name" value="ABC_TRANSPORTER_1"/>
    <property type="match status" value="1"/>
</dbReference>
<dbReference type="PROSITE" id="PS50893">
    <property type="entry name" value="ABC_TRANSPORTER_2"/>
    <property type="match status" value="1"/>
</dbReference>
<dbReference type="PROSITE" id="PS51315">
    <property type="entry name" value="UGPC"/>
    <property type="match status" value="1"/>
</dbReference>
<name>UGPC_PARXL</name>
<organism>
    <name type="scientific">Paraburkholderia xenovorans (strain LB400)</name>
    <dbReference type="NCBI Taxonomy" id="266265"/>
    <lineage>
        <taxon>Bacteria</taxon>
        <taxon>Pseudomonadati</taxon>
        <taxon>Pseudomonadota</taxon>
        <taxon>Betaproteobacteria</taxon>
        <taxon>Burkholderiales</taxon>
        <taxon>Burkholderiaceae</taxon>
        <taxon>Paraburkholderia</taxon>
    </lineage>
</organism>
<proteinExistence type="inferred from homology"/>
<sequence length="362" mass="39225">MAALTLQSVKKTYDGKQFVLHGIDVDVADGEFVVMVGPSGCGKSTLLRMVAGLERISEGSISIAGKVVNQLEPKDRNIAMVFQNYALYPHMSVAENMGYALKIAGVDRAQIQKRVNAAAQILELEALLQRKPRELSGGQRQRVAMGRAIVREPAVFLFDEPLSNLDARLRVQMRLEIQRLHARLATTSLYVTHDQIEAMTLAQRVIVMNKGHAEQIGAPTEVYERPATVFVASFIGSPGMNLLEGRVSDDGAVFAVAGNGPELPLAGVVSIGREVAKGREWTLGIRPEHMSPGQADAPHATLTVDSCELLGADNLAHGRWGKHDVTVRLPHAHRPAAGEALQVALPAQHLHFFDPASGRRAN</sequence>
<protein>
    <recommendedName>
        <fullName evidence="1">sn-glycerol-3-phosphate import ATP-binding protein UgpC</fullName>
        <ecNumber evidence="1">7.6.2.10</ecNumber>
    </recommendedName>
</protein>
<feature type="chain" id="PRO_0000289746" description="sn-glycerol-3-phosphate import ATP-binding protein UgpC">
    <location>
        <begin position="1"/>
        <end position="362"/>
    </location>
</feature>
<feature type="domain" description="ABC transporter" evidence="1">
    <location>
        <begin position="4"/>
        <end position="235"/>
    </location>
</feature>
<feature type="binding site" evidence="1">
    <location>
        <begin position="37"/>
        <end position="44"/>
    </location>
    <ligand>
        <name>ATP</name>
        <dbReference type="ChEBI" id="CHEBI:30616"/>
    </ligand>
</feature>
<reference key="1">
    <citation type="journal article" date="2006" name="Proc. Natl. Acad. Sci. U.S.A.">
        <title>Burkholderia xenovorans LB400 harbors a multi-replicon, 9.73-Mbp genome shaped for versatility.</title>
        <authorList>
            <person name="Chain P.S.G."/>
            <person name="Denef V.J."/>
            <person name="Konstantinidis K.T."/>
            <person name="Vergez L.M."/>
            <person name="Agullo L."/>
            <person name="Reyes V.L."/>
            <person name="Hauser L."/>
            <person name="Cordova M."/>
            <person name="Gomez L."/>
            <person name="Gonzalez M."/>
            <person name="Land M."/>
            <person name="Lao V."/>
            <person name="Larimer F."/>
            <person name="LiPuma J.J."/>
            <person name="Mahenthiralingam E."/>
            <person name="Malfatti S.A."/>
            <person name="Marx C.J."/>
            <person name="Parnell J.J."/>
            <person name="Ramette A."/>
            <person name="Richardson P."/>
            <person name="Seeger M."/>
            <person name="Smith D."/>
            <person name="Spilker T."/>
            <person name="Sul W.J."/>
            <person name="Tsoi T.V."/>
            <person name="Ulrich L.E."/>
            <person name="Zhulin I.B."/>
            <person name="Tiedje J.M."/>
        </authorList>
    </citation>
    <scope>NUCLEOTIDE SEQUENCE [LARGE SCALE GENOMIC DNA]</scope>
    <source>
        <strain>LB400</strain>
    </source>
</reference>
<keyword id="KW-0067">ATP-binding</keyword>
<keyword id="KW-0997">Cell inner membrane</keyword>
<keyword id="KW-1003">Cell membrane</keyword>
<keyword id="KW-0472">Membrane</keyword>
<keyword id="KW-0547">Nucleotide-binding</keyword>
<keyword id="KW-1185">Reference proteome</keyword>
<keyword id="KW-0762">Sugar transport</keyword>
<keyword id="KW-1278">Translocase</keyword>
<keyword id="KW-0813">Transport</keyword>
<evidence type="ECO:0000255" key="1">
    <source>
        <dbReference type="HAMAP-Rule" id="MF_01727"/>
    </source>
</evidence>
<gene>
    <name evidence="1" type="primary">ugpC</name>
    <name type="ordered locus">Bxeno_A3950</name>
    <name type="ORF">Bxe_A0445</name>
</gene>
<comment type="function">
    <text evidence="1">Part of the ABC transporter complex UgpBAEC involved in sn-glycerol-3-phosphate (G3P) import. Responsible for energy coupling to the transport system.</text>
</comment>
<comment type="catalytic activity">
    <reaction evidence="1">
        <text>sn-glycerol 3-phosphate(out) + ATP + H2O = sn-glycerol 3-phosphate(in) + ADP + phosphate + H(+)</text>
        <dbReference type="Rhea" id="RHEA:21668"/>
        <dbReference type="ChEBI" id="CHEBI:15377"/>
        <dbReference type="ChEBI" id="CHEBI:15378"/>
        <dbReference type="ChEBI" id="CHEBI:30616"/>
        <dbReference type="ChEBI" id="CHEBI:43474"/>
        <dbReference type="ChEBI" id="CHEBI:57597"/>
        <dbReference type="ChEBI" id="CHEBI:456216"/>
        <dbReference type="EC" id="7.6.2.10"/>
    </reaction>
</comment>
<comment type="subunit">
    <text evidence="1">The complex is composed of two ATP-binding proteins (UgpC), two transmembrane proteins (UgpA and UgpE) and a solute-binding protein (UgpB).</text>
</comment>
<comment type="subcellular location">
    <subcellularLocation>
        <location evidence="1">Cell inner membrane</location>
        <topology evidence="1">Peripheral membrane protein</topology>
    </subcellularLocation>
</comment>
<comment type="similarity">
    <text evidence="1">Belongs to the ABC transporter superfamily. sn-glycerol-3-phosphate importer (TC 3.A.1.1.3) family.</text>
</comment>